<keyword id="KW-0028">Amino-acid biosynthesis</keyword>
<keyword id="KW-0170">Cobalt</keyword>
<keyword id="KW-0220">Diaminopimelate biosynthesis</keyword>
<keyword id="KW-0378">Hydrolase</keyword>
<keyword id="KW-0457">Lysine biosynthesis</keyword>
<keyword id="KW-0479">Metal-binding</keyword>
<keyword id="KW-0862">Zinc</keyword>
<dbReference type="EC" id="3.5.1.18" evidence="1"/>
<dbReference type="EMBL" id="CP001010">
    <property type="protein sequence ID" value="ACB43763.1"/>
    <property type="molecule type" value="Genomic_DNA"/>
</dbReference>
<dbReference type="SMR" id="B1XTT6"/>
<dbReference type="STRING" id="452638.Pnec_0499"/>
<dbReference type="KEGG" id="pne:Pnec_0499"/>
<dbReference type="eggNOG" id="COG0624">
    <property type="taxonomic scope" value="Bacteria"/>
</dbReference>
<dbReference type="HOGENOM" id="CLU_021802_4_0_4"/>
<dbReference type="OrthoDB" id="9809784at2"/>
<dbReference type="UniPathway" id="UPA00034">
    <property type="reaction ID" value="UER00021"/>
</dbReference>
<dbReference type="GO" id="GO:0008777">
    <property type="term" value="F:acetylornithine deacetylase activity"/>
    <property type="evidence" value="ECO:0007669"/>
    <property type="project" value="TreeGrafter"/>
</dbReference>
<dbReference type="GO" id="GO:0050897">
    <property type="term" value="F:cobalt ion binding"/>
    <property type="evidence" value="ECO:0007669"/>
    <property type="project" value="UniProtKB-UniRule"/>
</dbReference>
<dbReference type="GO" id="GO:0009014">
    <property type="term" value="F:succinyl-diaminopimelate desuccinylase activity"/>
    <property type="evidence" value="ECO:0007669"/>
    <property type="project" value="UniProtKB-UniRule"/>
</dbReference>
<dbReference type="GO" id="GO:0008270">
    <property type="term" value="F:zinc ion binding"/>
    <property type="evidence" value="ECO:0007669"/>
    <property type="project" value="UniProtKB-UniRule"/>
</dbReference>
<dbReference type="GO" id="GO:0019877">
    <property type="term" value="P:diaminopimelate biosynthetic process"/>
    <property type="evidence" value="ECO:0007669"/>
    <property type="project" value="UniProtKB-UniRule"/>
</dbReference>
<dbReference type="GO" id="GO:0006526">
    <property type="term" value="P:L-arginine biosynthetic process"/>
    <property type="evidence" value="ECO:0007669"/>
    <property type="project" value="TreeGrafter"/>
</dbReference>
<dbReference type="GO" id="GO:0009089">
    <property type="term" value="P:lysine biosynthetic process via diaminopimelate"/>
    <property type="evidence" value="ECO:0007669"/>
    <property type="project" value="UniProtKB-UniRule"/>
</dbReference>
<dbReference type="CDD" id="cd03891">
    <property type="entry name" value="M20_DapE_proteobac"/>
    <property type="match status" value="1"/>
</dbReference>
<dbReference type="FunFam" id="3.30.70.360:FF:000011">
    <property type="entry name" value="Succinyl-diaminopimelate desuccinylase"/>
    <property type="match status" value="1"/>
</dbReference>
<dbReference type="FunFam" id="3.40.630.10:FF:000005">
    <property type="entry name" value="Succinyl-diaminopimelate desuccinylase"/>
    <property type="match status" value="1"/>
</dbReference>
<dbReference type="Gene3D" id="3.30.70.360">
    <property type="match status" value="1"/>
</dbReference>
<dbReference type="Gene3D" id="3.40.630.10">
    <property type="entry name" value="Zn peptidases"/>
    <property type="match status" value="2"/>
</dbReference>
<dbReference type="HAMAP" id="MF_01690">
    <property type="entry name" value="DapE"/>
    <property type="match status" value="1"/>
</dbReference>
<dbReference type="InterPro" id="IPR001261">
    <property type="entry name" value="ArgE/DapE_CS"/>
</dbReference>
<dbReference type="InterPro" id="IPR036264">
    <property type="entry name" value="Bact_exopeptidase_dim_dom"/>
</dbReference>
<dbReference type="InterPro" id="IPR005941">
    <property type="entry name" value="DapE_proteobac"/>
</dbReference>
<dbReference type="InterPro" id="IPR002933">
    <property type="entry name" value="Peptidase_M20"/>
</dbReference>
<dbReference type="InterPro" id="IPR011650">
    <property type="entry name" value="Peptidase_M20_dimer"/>
</dbReference>
<dbReference type="InterPro" id="IPR050072">
    <property type="entry name" value="Peptidase_M20A"/>
</dbReference>
<dbReference type="NCBIfam" id="TIGR01246">
    <property type="entry name" value="dapE_proteo"/>
    <property type="match status" value="1"/>
</dbReference>
<dbReference type="NCBIfam" id="NF009557">
    <property type="entry name" value="PRK13009.1"/>
    <property type="match status" value="1"/>
</dbReference>
<dbReference type="PANTHER" id="PTHR43808">
    <property type="entry name" value="ACETYLORNITHINE DEACETYLASE"/>
    <property type="match status" value="1"/>
</dbReference>
<dbReference type="PANTHER" id="PTHR43808:SF31">
    <property type="entry name" value="N-ACETYL-L-CITRULLINE DEACETYLASE"/>
    <property type="match status" value="1"/>
</dbReference>
<dbReference type="Pfam" id="PF07687">
    <property type="entry name" value="M20_dimer"/>
    <property type="match status" value="1"/>
</dbReference>
<dbReference type="Pfam" id="PF01546">
    <property type="entry name" value="Peptidase_M20"/>
    <property type="match status" value="1"/>
</dbReference>
<dbReference type="SUPFAM" id="SSF55031">
    <property type="entry name" value="Bacterial exopeptidase dimerisation domain"/>
    <property type="match status" value="1"/>
</dbReference>
<dbReference type="SUPFAM" id="SSF53187">
    <property type="entry name" value="Zn-dependent exopeptidases"/>
    <property type="match status" value="1"/>
</dbReference>
<dbReference type="PROSITE" id="PS00758">
    <property type="entry name" value="ARGE_DAPE_CPG2_1"/>
    <property type="match status" value="1"/>
</dbReference>
<organism>
    <name type="scientific">Polynucleobacter necessarius subsp. necessarius (strain STIR1)</name>
    <dbReference type="NCBI Taxonomy" id="452638"/>
    <lineage>
        <taxon>Bacteria</taxon>
        <taxon>Pseudomonadati</taxon>
        <taxon>Pseudomonadota</taxon>
        <taxon>Betaproteobacteria</taxon>
        <taxon>Burkholderiales</taxon>
        <taxon>Burkholderiaceae</taxon>
        <taxon>Polynucleobacter</taxon>
    </lineage>
</organism>
<protein>
    <recommendedName>
        <fullName evidence="1">Succinyl-diaminopimelate desuccinylase</fullName>
        <shortName evidence="1">SDAP desuccinylase</shortName>
        <ecNumber evidence="1">3.5.1.18</ecNumber>
    </recommendedName>
    <alternativeName>
        <fullName evidence="1">N-succinyl-LL-2,6-diaminoheptanedioate amidohydrolase</fullName>
    </alternativeName>
</protein>
<name>DAPE_POLNS</name>
<sequence length="383" mass="41426">MSATLKLTEALIACHSVTPADGGCQDLIAKRLQAIGFHAESVVSGPENFQVTNLWAIKKGKAGDQGKVLMFAGHTDVVPTGPLEKWTSDPFTPTIRDGMLYGRGAADMKTSLASFVVATEEFVTTHPDHQGSIAFLITSDEEGPANDGTVIMCERLQKHGQRLDYCVIGEPTSVNTLGDMIKNGRRGSLSGKLRVKGIQAHIAYPHLGQNPIHLSAPAISALVETQWDKGNEYFQPTSFQISNVHAGTGANNVIPGKLVVDFNFRFSTESKPEQLRERLEKILKDAGLEFEIDWVLGGSPFITGDGDLAGALRKAIKAETKIDTELSTTGGTSDGRFIAKICKEVVEFGPLNATSHKIDECVIVDDVVPLKNIYRKTLEQLIA</sequence>
<reference key="1">
    <citation type="journal article" date="2013" name="Proc. Natl. Acad. Sci. U.S.A.">
        <title>Polynucleobacter necessarius, a model for genome reduction in both free-living and symbiotic bacteria.</title>
        <authorList>
            <person name="Boscaro V."/>
            <person name="Felletti M."/>
            <person name="Vannini C."/>
            <person name="Ackerman M.S."/>
            <person name="Chain P.S."/>
            <person name="Malfatti S."/>
            <person name="Vergez L.M."/>
            <person name="Shin M."/>
            <person name="Doak T.G."/>
            <person name="Lynch M."/>
            <person name="Petroni G."/>
        </authorList>
    </citation>
    <scope>NUCLEOTIDE SEQUENCE [LARGE SCALE GENOMIC DNA]</scope>
    <source>
        <strain>STIR1</strain>
    </source>
</reference>
<gene>
    <name evidence="1" type="primary">dapE</name>
    <name type="ordered locus">Pnec_0499</name>
</gene>
<evidence type="ECO:0000255" key="1">
    <source>
        <dbReference type="HAMAP-Rule" id="MF_01690"/>
    </source>
</evidence>
<feature type="chain" id="PRO_0000375648" description="Succinyl-diaminopimelate desuccinylase">
    <location>
        <begin position="1"/>
        <end position="383"/>
    </location>
</feature>
<feature type="active site" evidence="1">
    <location>
        <position position="76"/>
    </location>
</feature>
<feature type="active site" description="Proton acceptor" evidence="1">
    <location>
        <position position="141"/>
    </location>
</feature>
<feature type="binding site" evidence="1">
    <location>
        <position position="74"/>
    </location>
    <ligand>
        <name>Zn(2+)</name>
        <dbReference type="ChEBI" id="CHEBI:29105"/>
        <label>1</label>
    </ligand>
</feature>
<feature type="binding site" evidence="1">
    <location>
        <position position="107"/>
    </location>
    <ligand>
        <name>Zn(2+)</name>
        <dbReference type="ChEBI" id="CHEBI:29105"/>
        <label>1</label>
    </ligand>
</feature>
<feature type="binding site" evidence="1">
    <location>
        <position position="107"/>
    </location>
    <ligand>
        <name>Zn(2+)</name>
        <dbReference type="ChEBI" id="CHEBI:29105"/>
        <label>2</label>
    </ligand>
</feature>
<feature type="binding site" evidence="1">
    <location>
        <position position="142"/>
    </location>
    <ligand>
        <name>Zn(2+)</name>
        <dbReference type="ChEBI" id="CHEBI:29105"/>
        <label>2</label>
    </ligand>
</feature>
<feature type="binding site" evidence="1">
    <location>
        <position position="170"/>
    </location>
    <ligand>
        <name>Zn(2+)</name>
        <dbReference type="ChEBI" id="CHEBI:29105"/>
        <label>1</label>
    </ligand>
</feature>
<feature type="binding site" evidence="1">
    <location>
        <position position="356"/>
    </location>
    <ligand>
        <name>Zn(2+)</name>
        <dbReference type="ChEBI" id="CHEBI:29105"/>
        <label>2</label>
    </ligand>
</feature>
<accession>B1XTT6</accession>
<comment type="function">
    <text evidence="1">Catalyzes the hydrolysis of N-succinyl-L,L-diaminopimelic acid (SDAP), forming succinate and LL-2,6-diaminopimelate (DAP), an intermediate involved in the bacterial biosynthesis of lysine and meso-diaminopimelic acid, an essential component of bacterial cell walls.</text>
</comment>
<comment type="catalytic activity">
    <reaction evidence="1">
        <text>N-succinyl-(2S,6S)-2,6-diaminopimelate + H2O = (2S,6S)-2,6-diaminopimelate + succinate</text>
        <dbReference type="Rhea" id="RHEA:22608"/>
        <dbReference type="ChEBI" id="CHEBI:15377"/>
        <dbReference type="ChEBI" id="CHEBI:30031"/>
        <dbReference type="ChEBI" id="CHEBI:57609"/>
        <dbReference type="ChEBI" id="CHEBI:58087"/>
        <dbReference type="EC" id="3.5.1.18"/>
    </reaction>
</comment>
<comment type="cofactor">
    <cofactor evidence="1">
        <name>Zn(2+)</name>
        <dbReference type="ChEBI" id="CHEBI:29105"/>
    </cofactor>
    <cofactor evidence="1">
        <name>Co(2+)</name>
        <dbReference type="ChEBI" id="CHEBI:48828"/>
    </cofactor>
    <text evidence="1">Binds 2 Zn(2+) or Co(2+) ions per subunit.</text>
</comment>
<comment type="pathway">
    <text evidence="1">Amino-acid biosynthesis; L-lysine biosynthesis via DAP pathway; LL-2,6-diaminopimelate from (S)-tetrahydrodipicolinate (succinylase route): step 3/3.</text>
</comment>
<comment type="subunit">
    <text evidence="1">Homodimer.</text>
</comment>
<comment type="similarity">
    <text evidence="1">Belongs to the peptidase M20A family. DapE subfamily.</text>
</comment>
<proteinExistence type="inferred from homology"/>